<comment type="function">
    <text evidence="2 3">With TMN2 and TMN3, plays a critical role in the late stages of a nutrient-controlled pathway notably regulating FLO11 gene expression. Acts downstream of RAS2 and TOR. Essential for cell adhesion and filamentous growth. May play a role as effector of cellular copper homeostasis.</text>
</comment>
<comment type="subcellular location">
    <subcellularLocation>
        <location evidence="4">Endosome membrane</location>
        <topology>Multi-pass membrane protein</topology>
    </subcellularLocation>
    <subcellularLocation>
        <location evidence="3">Vacuole membrane</location>
        <topology>Multi-pass membrane protein</topology>
    </subcellularLocation>
</comment>
<comment type="similarity">
    <text evidence="5">Belongs to the nonaspanin (TM9SF) (TC 9.A.2) family.</text>
</comment>
<gene>
    <name type="primary">EMP70</name>
    <name type="synonym">TMN1</name>
    <name type="ordered locus">YLR083C</name>
    <name type="ORF">L2385</name>
    <name type="ORF">L9449.11</name>
</gene>
<proteinExistence type="evidence at protein level"/>
<reference key="1">
    <citation type="submission" date="1992-07" db="EMBL/GenBank/DDBJ databases">
        <title>Molecular characterization of putative markers for early and late endosomes.</title>
        <authorList>
            <person name="Singer-Krueger B."/>
            <person name="Krueger U."/>
            <person name="Riezman H."/>
        </authorList>
    </citation>
    <scope>NUCLEOTIDE SEQUENCE [GENOMIC DNA]</scope>
    <source>
        <strain>MH 145-4B</strain>
    </source>
</reference>
<reference key="2">
    <citation type="journal article" date="1997" name="Nature">
        <title>The nucleotide sequence of Saccharomyces cerevisiae chromosome XII.</title>
        <authorList>
            <person name="Johnston M."/>
            <person name="Hillier L.W."/>
            <person name="Riles L."/>
            <person name="Albermann K."/>
            <person name="Andre B."/>
            <person name="Ansorge W."/>
            <person name="Benes V."/>
            <person name="Brueckner M."/>
            <person name="Delius H."/>
            <person name="Dubois E."/>
            <person name="Duesterhoeft A."/>
            <person name="Entian K.-D."/>
            <person name="Floeth M."/>
            <person name="Goffeau A."/>
            <person name="Hebling U."/>
            <person name="Heumann K."/>
            <person name="Heuss-Neitzel D."/>
            <person name="Hilbert H."/>
            <person name="Hilger F."/>
            <person name="Kleine K."/>
            <person name="Koetter P."/>
            <person name="Louis E.J."/>
            <person name="Messenguy F."/>
            <person name="Mewes H.-W."/>
            <person name="Miosga T."/>
            <person name="Moestl D."/>
            <person name="Mueller-Auer S."/>
            <person name="Nentwich U."/>
            <person name="Obermaier B."/>
            <person name="Piravandi E."/>
            <person name="Pohl T.M."/>
            <person name="Portetelle D."/>
            <person name="Purnelle B."/>
            <person name="Rechmann S."/>
            <person name="Rieger M."/>
            <person name="Rinke M."/>
            <person name="Rose M."/>
            <person name="Scharfe M."/>
            <person name="Scherens B."/>
            <person name="Scholler P."/>
            <person name="Schwager C."/>
            <person name="Schwarz S."/>
            <person name="Underwood A.P."/>
            <person name="Urrestarazu L.A."/>
            <person name="Vandenbol M."/>
            <person name="Verhasselt P."/>
            <person name="Vierendeels F."/>
            <person name="Voet M."/>
            <person name="Volckaert G."/>
            <person name="Voss H."/>
            <person name="Wambutt R."/>
            <person name="Wedler E."/>
            <person name="Wedler H."/>
            <person name="Zimmermann F.K."/>
            <person name="Zollner A."/>
            <person name="Hani J."/>
            <person name="Hoheisel J.D."/>
        </authorList>
    </citation>
    <scope>NUCLEOTIDE SEQUENCE [LARGE SCALE GENOMIC DNA]</scope>
    <source>
        <strain>ATCC 204508 / S288c</strain>
    </source>
</reference>
<reference key="3">
    <citation type="journal article" date="2014" name="G3 (Bethesda)">
        <title>The reference genome sequence of Saccharomyces cerevisiae: Then and now.</title>
        <authorList>
            <person name="Engel S.R."/>
            <person name="Dietrich F.S."/>
            <person name="Fisk D.G."/>
            <person name="Binkley G."/>
            <person name="Balakrishnan R."/>
            <person name="Costanzo M.C."/>
            <person name="Dwight S.S."/>
            <person name="Hitz B.C."/>
            <person name="Karra K."/>
            <person name="Nash R.S."/>
            <person name="Weng S."/>
            <person name="Wong E.D."/>
            <person name="Lloyd P."/>
            <person name="Skrzypek M.S."/>
            <person name="Miyasato S.R."/>
            <person name="Simison M."/>
            <person name="Cherry J.M."/>
        </authorList>
    </citation>
    <scope>GENOME REANNOTATION</scope>
    <source>
        <strain>ATCC 204508 / S288c</strain>
    </source>
</reference>
<reference key="4">
    <citation type="journal article" date="1993" name="J. Biol. Chem.">
        <title>Partial purification and characterization of early and late endosomes from yeast. Identification of four novel proteins.</title>
        <authorList>
            <person name="Singer-Krueger B."/>
            <person name="Frank R."/>
            <person name="Crausaz F."/>
            <person name="Riezman H."/>
        </authorList>
    </citation>
    <scope>PROTEIN SEQUENCE OF 23-42</scope>
    <scope>SUBCELLULAR LOCATION</scope>
    <source>
        <strain>RH732</strain>
    </source>
</reference>
<reference key="5">
    <citation type="journal article" date="1998" name="Gene">
        <title>Characterization of a 76 kDa endosomal, multispanning membrane protein that is highly conserved throughout evolution.</title>
        <authorList>
            <person name="Schimmoeller F."/>
            <person name="Diaz E."/>
            <person name="Muehlbauer B."/>
            <person name="Pfeffer S.R."/>
        </authorList>
    </citation>
    <scope>PROBABLE CLEAVAGE BY KEX2</scope>
</reference>
<reference key="6">
    <citation type="journal article" date="2006" name="Proc. Natl. Acad. Sci. U.S.A.">
        <title>A global topology map of the Saccharomyces cerevisiae membrane proteome.</title>
        <authorList>
            <person name="Kim H."/>
            <person name="Melen K."/>
            <person name="Oesterberg M."/>
            <person name="von Heijne G."/>
        </authorList>
    </citation>
    <scope>TOPOLOGY [LARGE SCALE ANALYSIS]</scope>
    <source>
        <strain>ATCC 208353 / W303-1A</strain>
    </source>
</reference>
<reference key="7">
    <citation type="journal article" date="2008" name="J. Biol. Chem.">
        <title>Control of cellular physiology by TM9 proteins in yeast and Dictyostelium.</title>
        <authorList>
            <person name="Froquet R."/>
            <person name="Cherix N."/>
            <person name="Birke R."/>
            <person name="Benghezal M."/>
            <person name="Cameroni E."/>
            <person name="Letourneur F."/>
            <person name="Moesch H.-U."/>
            <person name="De Virgilio C."/>
            <person name="Cosson P."/>
        </authorList>
    </citation>
    <scope>FUNCTION</scope>
</reference>
<reference key="8">
    <citation type="journal article" date="2010" name="Physiol. Plantarum">
        <title>Transmembrane nine proteins in yeast and Arabidopsis affect cellular metal contents without changing vacuolar morphology.</title>
        <authorList>
            <person name="Hegelund J.N."/>
            <person name="Jahn T.P."/>
            <person name="Baekgaard L."/>
            <person name="Palmgren M.G."/>
            <person name="Schjoerring J.K."/>
        </authorList>
    </citation>
    <scope>FUNCTION</scope>
</reference>
<organism>
    <name type="scientific">Saccharomyces cerevisiae (strain ATCC 204508 / S288c)</name>
    <name type="common">Baker's yeast</name>
    <dbReference type="NCBI Taxonomy" id="559292"/>
    <lineage>
        <taxon>Eukaryota</taxon>
        <taxon>Fungi</taxon>
        <taxon>Dikarya</taxon>
        <taxon>Ascomycota</taxon>
        <taxon>Saccharomycotina</taxon>
        <taxon>Saccharomycetes</taxon>
        <taxon>Saccharomycetales</taxon>
        <taxon>Saccharomycetaceae</taxon>
        <taxon>Saccharomyces</taxon>
    </lineage>
</organism>
<dbReference type="EMBL" id="X67316">
    <property type="protein sequence ID" value="CAA47730.1"/>
    <property type="molecule type" value="Genomic_DNA"/>
</dbReference>
<dbReference type="EMBL" id="U53880">
    <property type="protein sequence ID" value="AAB67587.1"/>
    <property type="molecule type" value="Genomic_DNA"/>
</dbReference>
<dbReference type="EMBL" id="Z73255">
    <property type="protein sequence ID" value="CAA97643.1"/>
    <property type="molecule type" value="Genomic_DNA"/>
</dbReference>
<dbReference type="EMBL" id="BK006945">
    <property type="protein sequence ID" value="DAA09399.1"/>
    <property type="molecule type" value="Genomic_DNA"/>
</dbReference>
<dbReference type="PIR" id="S25110">
    <property type="entry name" value="S25110"/>
</dbReference>
<dbReference type="PIR" id="S64915">
    <property type="entry name" value="S64915"/>
</dbReference>
<dbReference type="RefSeq" id="NP_013184.1">
    <property type="nucleotide sequence ID" value="NM_001181970.1"/>
</dbReference>
<dbReference type="BioGRID" id="31356">
    <property type="interactions" value="92"/>
</dbReference>
<dbReference type="DIP" id="DIP-4700N"/>
<dbReference type="FunCoup" id="P32802">
    <property type="interactions" value="1058"/>
</dbReference>
<dbReference type="IntAct" id="P32802">
    <property type="interactions" value="10"/>
</dbReference>
<dbReference type="MINT" id="P32802"/>
<dbReference type="STRING" id="4932.YLR083C"/>
<dbReference type="GlyCosmos" id="P32802">
    <property type="glycosylation" value="2 sites, No reported glycans"/>
</dbReference>
<dbReference type="GlyGen" id="P32802">
    <property type="glycosylation" value="2 sites"/>
</dbReference>
<dbReference type="iPTMnet" id="P32802"/>
<dbReference type="PaxDb" id="4932-YLR083C"/>
<dbReference type="PeptideAtlas" id="P32802"/>
<dbReference type="TopDownProteomics" id="P32802"/>
<dbReference type="EnsemblFungi" id="YLR083C_mRNA">
    <property type="protein sequence ID" value="YLR083C"/>
    <property type="gene ID" value="YLR083C"/>
</dbReference>
<dbReference type="GeneID" id="850772"/>
<dbReference type="KEGG" id="sce:YLR083C"/>
<dbReference type="AGR" id="SGD:S000004073"/>
<dbReference type="SGD" id="S000004073">
    <property type="gene designation" value="EMP70"/>
</dbReference>
<dbReference type="VEuPathDB" id="FungiDB:YLR083C"/>
<dbReference type="eggNOG" id="KOG1278">
    <property type="taxonomic scope" value="Eukaryota"/>
</dbReference>
<dbReference type="GeneTree" id="ENSGT00940000172441"/>
<dbReference type="HOGENOM" id="CLU_010714_4_1_1"/>
<dbReference type="InParanoid" id="P32802"/>
<dbReference type="OMA" id="TILITYH"/>
<dbReference type="OrthoDB" id="1666796at2759"/>
<dbReference type="BioCyc" id="YEAST:G3O-32234-MONOMER"/>
<dbReference type="BioGRID-ORCS" id="850772">
    <property type="hits" value="2 hits in 10 CRISPR screens"/>
</dbReference>
<dbReference type="PRO" id="PR:P32802"/>
<dbReference type="Proteomes" id="UP000002311">
    <property type="component" value="Chromosome XII"/>
</dbReference>
<dbReference type="RNAct" id="P32802">
    <property type="molecule type" value="protein"/>
</dbReference>
<dbReference type="GO" id="GO:0005768">
    <property type="term" value="C:endosome"/>
    <property type="evidence" value="ECO:0000314"/>
    <property type="project" value="SGD"/>
</dbReference>
<dbReference type="GO" id="GO:0010008">
    <property type="term" value="C:endosome membrane"/>
    <property type="evidence" value="ECO:0007669"/>
    <property type="project" value="UniProtKB-SubCell"/>
</dbReference>
<dbReference type="GO" id="GO:0000329">
    <property type="term" value="C:fungal-type vacuole membrane"/>
    <property type="evidence" value="ECO:0000314"/>
    <property type="project" value="SGD"/>
</dbReference>
<dbReference type="GO" id="GO:0016197">
    <property type="term" value="P:endosomal transport"/>
    <property type="evidence" value="ECO:0000315"/>
    <property type="project" value="SGD"/>
</dbReference>
<dbReference type="GO" id="GO:0006878">
    <property type="term" value="P:intracellular copper ion homeostasis"/>
    <property type="evidence" value="ECO:0000315"/>
    <property type="project" value="SGD"/>
</dbReference>
<dbReference type="GO" id="GO:0001403">
    <property type="term" value="P:invasive growth in response to glucose limitation"/>
    <property type="evidence" value="ECO:0000315"/>
    <property type="project" value="SGD"/>
</dbReference>
<dbReference type="GO" id="GO:0006811">
    <property type="term" value="P:monoatomic ion transport"/>
    <property type="evidence" value="ECO:0007669"/>
    <property type="project" value="UniProtKB-KW"/>
</dbReference>
<dbReference type="GO" id="GO:0072657">
    <property type="term" value="P:protein localization to membrane"/>
    <property type="evidence" value="ECO:0000318"/>
    <property type="project" value="GO_Central"/>
</dbReference>
<dbReference type="GO" id="GO:0007124">
    <property type="term" value="P:pseudohyphal growth"/>
    <property type="evidence" value="ECO:0000316"/>
    <property type="project" value="SGD"/>
</dbReference>
<dbReference type="GO" id="GO:0007034">
    <property type="term" value="P:vacuolar transport"/>
    <property type="evidence" value="ECO:0000316"/>
    <property type="project" value="SGD"/>
</dbReference>
<dbReference type="InterPro" id="IPR004240">
    <property type="entry name" value="EMP70"/>
</dbReference>
<dbReference type="PANTHER" id="PTHR10766:SF111">
    <property type="entry name" value="TRANSMEMBRANE 9 SUPERFAMILY MEMBER 2"/>
    <property type="match status" value="1"/>
</dbReference>
<dbReference type="PANTHER" id="PTHR10766">
    <property type="entry name" value="TRANSMEMBRANE 9 SUPERFAMILY PROTEIN"/>
    <property type="match status" value="1"/>
</dbReference>
<dbReference type="Pfam" id="PF02990">
    <property type="entry name" value="EMP70"/>
    <property type="match status" value="1"/>
</dbReference>
<name>TMN1_YEAST</name>
<sequence>MIYKMAHVQLLLLYFFVSTVKAFYLPGVAPTTYRENDNIPLLVNHLTPSMNYQHKDEDGNNVSGDKENFLYSYDYYYNRFHFCQPEKVEKQPESLGSVIFGDRIYNSPFQLNMLQEKECESLCKTVIPGDDAKFINKLIKNGFFQNWLIDGLPAAREVYDGRTKTSFYGAGFNLGFVQVTQGTDIEATPKGAETTDKDVELETRNDRNMVKTYELPYFANHFDIMIEYHDRGEGNYRVVGVIVEPVSIKRSSPGTCETTGSPLMLDEGNDNEVYFTYSVKFNESATSWATRWDKYLHVYDPSIQWFSLINFSLVVVLLSSVVIHSLLRALKSDFARYNELNLDDDFQEDSGWKLNHGDVFRSPSQSLTLSILVGSGVQLFLMVTCSIFFAALGFLSPSSRGSLATVMFILYALFGFVGSYTSMGIYKFFNGPYWKANLILTPLLVPGAILLIIIALNFFLMFVHSSGVIPASTLFFMVFLWFLFSIPLSFAGSLIARKRCHWDEHPTKTNQIARQIPFQPWYLKTIPATLIAGIFPFGSIAVELYFIYTSLWFNKIFYMFGFLFFSFLLLTLTSSLVTILITYHSLCLENWKWQWRGFIIGGAGCALYVFIHSILFTKFKLGGFTTIVLYVGYSSVISLLCCLVTGSIGFISSMLFVRKIYSSIKVD</sequence>
<keyword id="KW-0903">Direct protein sequencing</keyword>
<keyword id="KW-0967">Endosome</keyword>
<keyword id="KW-0325">Glycoprotein</keyword>
<keyword id="KW-0406">Ion transport</keyword>
<keyword id="KW-0472">Membrane</keyword>
<keyword id="KW-1185">Reference proteome</keyword>
<keyword id="KW-0732">Signal</keyword>
<keyword id="KW-0812">Transmembrane</keyword>
<keyword id="KW-1133">Transmembrane helix</keyword>
<keyword id="KW-0813">Transport</keyword>
<keyword id="KW-0926">Vacuole</keyword>
<evidence type="ECO:0000255" key="1"/>
<evidence type="ECO:0000269" key="2">
    <source>
    </source>
</evidence>
<evidence type="ECO:0000269" key="3">
    <source>
    </source>
</evidence>
<evidence type="ECO:0000269" key="4">
    <source>
    </source>
</evidence>
<evidence type="ECO:0000305" key="5"/>
<accession>P32802</accession>
<accession>D6VY83</accession>
<accession>Q12101</accession>
<protein>
    <recommendedName>
        <fullName>Transmembrane 9 superfamily member 1</fullName>
    </recommendedName>
    <alternativeName>
        <fullName>70 kDa endomembrane protein</fullName>
    </alternativeName>
    <alternativeName>
        <fullName>Endomembrane protein EMP70</fullName>
    </alternativeName>
    <component>
        <recommendedName>
            <fullName>Protein p24a</fullName>
        </recommendedName>
        <alternativeName>
            <fullName>Acidic 24 kDa late endocytic intermediate component</fullName>
        </alternativeName>
    </component>
</protein>
<feature type="signal peptide" evidence="4">
    <location>
        <begin position="1"/>
        <end position="22"/>
    </location>
</feature>
<feature type="chain" id="PRO_0000034371" description="Transmembrane 9 superfamily member 1">
    <location>
        <begin position="23"/>
        <end position="667"/>
    </location>
</feature>
<feature type="chain" id="PRO_0000034372" description="Protein p24a">
    <location>
        <begin position="23"/>
        <end position="250"/>
    </location>
</feature>
<feature type="topological domain" description="Lumenal" evidence="1">
    <location>
        <begin position="23"/>
        <end position="302"/>
    </location>
</feature>
<feature type="transmembrane region" description="Helical" evidence="1">
    <location>
        <begin position="303"/>
        <end position="323"/>
    </location>
</feature>
<feature type="topological domain" description="Cytoplasmic" evidence="1">
    <location>
        <begin position="324"/>
        <end position="370"/>
    </location>
</feature>
<feature type="transmembrane region" description="Helical" evidence="1">
    <location>
        <begin position="371"/>
        <end position="391"/>
    </location>
</feature>
<feature type="topological domain" description="Lumenal" evidence="1">
    <location>
        <begin position="392"/>
        <end position="405"/>
    </location>
</feature>
<feature type="transmembrane region" description="Helical" evidence="1">
    <location>
        <begin position="406"/>
        <end position="426"/>
    </location>
</feature>
<feature type="topological domain" description="Cytoplasmic" evidence="1">
    <location>
        <begin position="427"/>
        <end position="442"/>
    </location>
</feature>
<feature type="transmembrane region" description="Helical" evidence="1">
    <location>
        <begin position="443"/>
        <end position="463"/>
    </location>
</feature>
<feature type="topological domain" description="Lumenal" evidence="1">
    <location>
        <begin position="464"/>
        <end position="474"/>
    </location>
</feature>
<feature type="transmembrane region" description="Helical" evidence="1">
    <location>
        <begin position="475"/>
        <end position="495"/>
    </location>
</feature>
<feature type="topological domain" description="Cytoplasmic" evidence="1">
    <location>
        <begin position="496"/>
        <end position="527"/>
    </location>
</feature>
<feature type="transmembrane region" description="Helical" evidence="1">
    <location>
        <begin position="528"/>
        <end position="548"/>
    </location>
</feature>
<feature type="topological domain" description="Lumenal" evidence="1">
    <location>
        <begin position="549"/>
        <end position="560"/>
    </location>
</feature>
<feature type="transmembrane region" description="Helical" evidence="1">
    <location>
        <begin position="561"/>
        <end position="581"/>
    </location>
</feature>
<feature type="topological domain" description="Cytoplasmic" evidence="1">
    <location>
        <begin position="582"/>
        <end position="596"/>
    </location>
</feature>
<feature type="transmembrane region" description="Helical" evidence="1">
    <location>
        <begin position="597"/>
        <end position="617"/>
    </location>
</feature>
<feature type="topological domain" description="Lumenal" evidence="1">
    <location>
        <begin position="618"/>
        <end position="635"/>
    </location>
</feature>
<feature type="transmembrane region" description="Helical" evidence="1">
    <location>
        <begin position="636"/>
        <end position="656"/>
    </location>
</feature>
<feature type="topological domain" description="Cytoplasmic" evidence="1">
    <location>
        <begin position="657"/>
        <end position="667"/>
    </location>
</feature>
<feature type="site" description="Cleavage; by KEX2" evidence="1">
    <location>
        <begin position="250"/>
        <end position="251"/>
    </location>
</feature>
<feature type="glycosylation site" description="N-linked (GlcNAc...) asparagine" evidence="1">
    <location>
        <position position="61"/>
    </location>
</feature>
<feature type="glycosylation site" description="N-linked (GlcNAc...) asparagine" evidence="1">
    <location>
        <position position="282"/>
    </location>
</feature>
<feature type="sequence conflict" description="In Ref. 1; CAA47730." evidence="5" ref="1">
    <original>R</original>
    <variation>C</variation>
    <location>
        <position position="207"/>
    </location>
</feature>
<feature type="sequence conflict" description="In Ref. 1; CAA47730." evidence="5" ref="1">
    <original>G</original>
    <variation>E</variation>
    <location>
        <position position="268"/>
    </location>
</feature>
<feature type="sequence conflict" description="In Ref. 1; CAA47730." evidence="5" ref="1">
    <original>L</original>
    <variation>S</variation>
    <location>
        <position position="488"/>
    </location>
</feature>